<feature type="chain" id="PRO_0000146908" description="Adenosylcobinamide-GDP ribazoletransferase">
    <location>
        <begin position="1"/>
        <end position="199"/>
    </location>
</feature>
<feature type="transmembrane region" description="Helical" evidence="1">
    <location>
        <begin position="2"/>
        <end position="22"/>
    </location>
</feature>
<feature type="transmembrane region" description="Helical" evidence="1">
    <location>
        <begin position="61"/>
        <end position="81"/>
    </location>
</feature>
<comment type="function">
    <text evidence="1">Joins adenosylcobinamide-GDP and alpha-ribazole to generate adenosylcobalamin (Ado-cobalamin). Also synthesizes adenosylcobalamin 5'-phosphate from adenosylcobinamide-GDP and alpha-ribazole 5'-phosphate.</text>
</comment>
<comment type="catalytic activity">
    <reaction evidence="1">
        <text>alpha-ribazole + adenosylcob(III)inamide-GDP = adenosylcob(III)alamin + GMP + H(+)</text>
        <dbReference type="Rhea" id="RHEA:16049"/>
        <dbReference type="ChEBI" id="CHEBI:10329"/>
        <dbReference type="ChEBI" id="CHEBI:15378"/>
        <dbReference type="ChEBI" id="CHEBI:18408"/>
        <dbReference type="ChEBI" id="CHEBI:58115"/>
        <dbReference type="ChEBI" id="CHEBI:60487"/>
        <dbReference type="EC" id="2.7.8.26"/>
    </reaction>
</comment>
<comment type="catalytic activity">
    <reaction evidence="1">
        <text>alpha-ribazole 5'-phosphate + adenosylcob(III)inamide-GDP = adenosylcob(III)alamin 5'-phosphate + GMP + H(+)</text>
        <dbReference type="Rhea" id="RHEA:23560"/>
        <dbReference type="ChEBI" id="CHEBI:15378"/>
        <dbReference type="ChEBI" id="CHEBI:57918"/>
        <dbReference type="ChEBI" id="CHEBI:58115"/>
        <dbReference type="ChEBI" id="CHEBI:60487"/>
        <dbReference type="ChEBI" id="CHEBI:60493"/>
        <dbReference type="EC" id="2.7.8.26"/>
    </reaction>
</comment>
<comment type="cofactor">
    <cofactor evidence="1">
        <name>Mg(2+)</name>
        <dbReference type="ChEBI" id="CHEBI:18420"/>
    </cofactor>
</comment>
<comment type="pathway">
    <text evidence="1">Cofactor biosynthesis; adenosylcobalamin biosynthesis; adenosylcobalamin from cob(II)yrinate a,c-diamide: step 7/7.</text>
</comment>
<comment type="subcellular location">
    <subcellularLocation>
        <location evidence="1">Cell membrane</location>
        <topology evidence="1">Multi-pass membrane protein</topology>
    </subcellularLocation>
</comment>
<comment type="similarity">
    <text evidence="1">Belongs to the CobS family.</text>
</comment>
<proteinExistence type="inferred from homology"/>
<accession>Q9HPL2</accession>
<name>COBS_HALSA</name>
<organism>
    <name type="scientific">Halobacterium salinarum (strain ATCC 700922 / JCM 11081 / NRC-1)</name>
    <name type="common">Halobacterium halobium</name>
    <dbReference type="NCBI Taxonomy" id="64091"/>
    <lineage>
        <taxon>Archaea</taxon>
        <taxon>Methanobacteriati</taxon>
        <taxon>Methanobacteriota</taxon>
        <taxon>Stenosarchaea group</taxon>
        <taxon>Halobacteria</taxon>
        <taxon>Halobacteriales</taxon>
        <taxon>Halobacteriaceae</taxon>
        <taxon>Halobacterium</taxon>
        <taxon>Halobacterium salinarum NRC-34001</taxon>
    </lineage>
</organism>
<protein>
    <recommendedName>
        <fullName evidence="1">Adenosylcobinamide-GDP ribazoletransferase</fullName>
        <ecNumber evidence="1">2.7.8.26</ecNumber>
    </recommendedName>
    <alternativeName>
        <fullName evidence="1">Cobalamin synthase</fullName>
    </alternativeName>
    <alternativeName>
        <fullName evidence="1">Cobalamin-5'-phosphate synthase</fullName>
    </alternativeName>
</protein>
<keyword id="KW-1003">Cell membrane</keyword>
<keyword id="KW-0169">Cobalamin biosynthesis</keyword>
<keyword id="KW-0460">Magnesium</keyword>
<keyword id="KW-0472">Membrane</keyword>
<keyword id="KW-1185">Reference proteome</keyword>
<keyword id="KW-0808">Transferase</keyword>
<keyword id="KW-0812">Transmembrane</keyword>
<keyword id="KW-1133">Transmembrane helix</keyword>
<evidence type="ECO:0000255" key="1">
    <source>
        <dbReference type="HAMAP-Rule" id="MF_00719"/>
    </source>
</evidence>
<reference key="1">
    <citation type="journal article" date="2000" name="Proc. Natl. Acad. Sci. U.S.A.">
        <title>Genome sequence of Halobacterium species NRC-1.</title>
        <authorList>
            <person name="Ng W.V."/>
            <person name="Kennedy S.P."/>
            <person name="Mahairas G.G."/>
            <person name="Berquist B."/>
            <person name="Pan M."/>
            <person name="Shukla H.D."/>
            <person name="Lasky S.R."/>
            <person name="Baliga N.S."/>
            <person name="Thorsson V."/>
            <person name="Sbrogna J."/>
            <person name="Swartzell S."/>
            <person name="Weir D."/>
            <person name="Hall J."/>
            <person name="Dahl T.A."/>
            <person name="Welti R."/>
            <person name="Goo Y.A."/>
            <person name="Leithauser B."/>
            <person name="Keller K."/>
            <person name="Cruz R."/>
            <person name="Danson M.J."/>
            <person name="Hough D.W."/>
            <person name="Maddocks D.G."/>
            <person name="Jablonski P.E."/>
            <person name="Krebs M.P."/>
            <person name="Angevine C.M."/>
            <person name="Dale H."/>
            <person name="Isenbarger T.A."/>
            <person name="Peck R.F."/>
            <person name="Pohlschroder M."/>
            <person name="Spudich J.L."/>
            <person name="Jung K.-H."/>
            <person name="Alam M."/>
            <person name="Freitas T."/>
            <person name="Hou S."/>
            <person name="Daniels C.J."/>
            <person name="Dennis P.P."/>
            <person name="Omer A.D."/>
            <person name="Ebhardt H."/>
            <person name="Lowe T.M."/>
            <person name="Liang P."/>
            <person name="Riley M."/>
            <person name="Hood L."/>
            <person name="DasSarma S."/>
        </authorList>
    </citation>
    <scope>NUCLEOTIDE SEQUENCE [LARGE SCALE GENOMIC DNA]</scope>
    <source>
        <strain>ATCC 700922 / JCM 11081 / NRC-1</strain>
    </source>
</reference>
<gene>
    <name evidence="1" type="primary">cobS</name>
    <name type="ordered locus">VNG_1580H</name>
</gene>
<dbReference type="EC" id="2.7.8.26" evidence="1"/>
<dbReference type="EMBL" id="AE004437">
    <property type="protein sequence ID" value="AAG19855.1"/>
    <property type="molecule type" value="Genomic_DNA"/>
</dbReference>
<dbReference type="PIR" id="C84311">
    <property type="entry name" value="C84311"/>
</dbReference>
<dbReference type="SMR" id="Q9HPL2"/>
<dbReference type="FunCoup" id="Q9HPL2">
    <property type="interactions" value="67"/>
</dbReference>
<dbReference type="STRING" id="64091.VNG_1580H"/>
<dbReference type="PaxDb" id="64091-VNG_1580H"/>
<dbReference type="KEGG" id="hal:VNG_1580H"/>
<dbReference type="PATRIC" id="fig|64091.14.peg.1208"/>
<dbReference type="HOGENOM" id="CLU_057426_2_0_2"/>
<dbReference type="InParanoid" id="Q9HPL2"/>
<dbReference type="UniPathway" id="UPA00148">
    <property type="reaction ID" value="UER00238"/>
</dbReference>
<dbReference type="Proteomes" id="UP000000554">
    <property type="component" value="Chromosome"/>
</dbReference>
<dbReference type="GO" id="GO:0005886">
    <property type="term" value="C:plasma membrane"/>
    <property type="evidence" value="ECO:0007669"/>
    <property type="project" value="UniProtKB-SubCell"/>
</dbReference>
<dbReference type="GO" id="GO:0051073">
    <property type="term" value="F:adenosylcobinamide-GDP ribazoletransferase activity"/>
    <property type="evidence" value="ECO:0007669"/>
    <property type="project" value="UniProtKB-UniRule"/>
</dbReference>
<dbReference type="GO" id="GO:0008818">
    <property type="term" value="F:cobalamin 5'-phosphate synthase activity"/>
    <property type="evidence" value="ECO:0007669"/>
    <property type="project" value="UniProtKB-UniRule"/>
</dbReference>
<dbReference type="GO" id="GO:0009236">
    <property type="term" value="P:cobalamin biosynthetic process"/>
    <property type="evidence" value="ECO:0000318"/>
    <property type="project" value="GO_Central"/>
</dbReference>
<dbReference type="HAMAP" id="MF_00719">
    <property type="entry name" value="CobS"/>
    <property type="match status" value="1"/>
</dbReference>
<dbReference type="InterPro" id="IPR003805">
    <property type="entry name" value="CobS"/>
</dbReference>
<dbReference type="PANTHER" id="PTHR34148">
    <property type="entry name" value="ADENOSYLCOBINAMIDE-GDP RIBAZOLETRANSFERASE"/>
    <property type="match status" value="1"/>
</dbReference>
<dbReference type="PANTHER" id="PTHR34148:SF1">
    <property type="entry name" value="ADENOSYLCOBINAMIDE-GDP RIBAZOLETRANSFERASE"/>
    <property type="match status" value="1"/>
</dbReference>
<dbReference type="Pfam" id="PF02654">
    <property type="entry name" value="CobS"/>
    <property type="match status" value="1"/>
</dbReference>
<sequence length="199" mass="18974">MLAGGVPHGTVAFAYLAVVFAVTGINHLDGVADAGDAAVVHGDPADRRTVLKDTTTGVGAIAAVVVVVAGLVTGSLGVAALPTWTAVGVVVATEVGAKTSMAAVACLAHAPHDGLGSQFTGNATPGALPAVAGVALPVALASVPSPAAAGALAGAVGAGALTRRWLTGLLGGANGDVFGAVNEVSRVVGLHAGVVVWTL</sequence>